<gene>
    <name evidence="1" type="primary">ccsB</name>
    <name evidence="1" type="synonym">ccs1</name>
    <name type="ordered locus">A9601_16621</name>
</gene>
<evidence type="ECO:0000255" key="1">
    <source>
        <dbReference type="HAMAP-Rule" id="MF_01392"/>
    </source>
</evidence>
<reference key="1">
    <citation type="journal article" date="2007" name="PLoS Genet.">
        <title>Patterns and implications of gene gain and loss in the evolution of Prochlorococcus.</title>
        <authorList>
            <person name="Kettler G.C."/>
            <person name="Martiny A.C."/>
            <person name="Huang K."/>
            <person name="Zucker J."/>
            <person name="Coleman M.L."/>
            <person name="Rodrigue S."/>
            <person name="Chen F."/>
            <person name="Lapidus A."/>
            <person name="Ferriera S."/>
            <person name="Johnson J."/>
            <person name="Steglich C."/>
            <person name="Church G.M."/>
            <person name="Richardson P."/>
            <person name="Chisholm S.W."/>
        </authorList>
    </citation>
    <scope>NUCLEOTIDE SEQUENCE [LARGE SCALE GENOMIC DNA]</scope>
    <source>
        <strain>AS9601</strain>
    </source>
</reference>
<organism>
    <name type="scientific">Prochlorococcus marinus (strain AS9601)</name>
    <dbReference type="NCBI Taxonomy" id="146891"/>
    <lineage>
        <taxon>Bacteria</taxon>
        <taxon>Bacillati</taxon>
        <taxon>Cyanobacteriota</taxon>
        <taxon>Cyanophyceae</taxon>
        <taxon>Synechococcales</taxon>
        <taxon>Prochlorococcaceae</taxon>
        <taxon>Prochlorococcus</taxon>
    </lineage>
</organism>
<name>CCS1_PROMS</name>
<protein>
    <recommendedName>
        <fullName evidence="1">Cytochrome c biogenesis protein CcsB</fullName>
    </recommendedName>
</protein>
<dbReference type="EMBL" id="CP000551">
    <property type="protein sequence ID" value="ABM70945.1"/>
    <property type="molecule type" value="Genomic_DNA"/>
</dbReference>
<dbReference type="RefSeq" id="WP_011819074.1">
    <property type="nucleotide sequence ID" value="NC_008816.1"/>
</dbReference>
<dbReference type="SMR" id="A2BT34"/>
<dbReference type="STRING" id="146891.A9601_16621"/>
<dbReference type="KEGG" id="pmb:A9601_16621"/>
<dbReference type="eggNOG" id="COG1333">
    <property type="taxonomic scope" value="Bacteria"/>
</dbReference>
<dbReference type="HOGENOM" id="CLU_034630_0_0_3"/>
<dbReference type="OrthoDB" id="9770923at2"/>
<dbReference type="Proteomes" id="UP000002590">
    <property type="component" value="Chromosome"/>
</dbReference>
<dbReference type="GO" id="GO:0031676">
    <property type="term" value="C:plasma membrane-derived thylakoid membrane"/>
    <property type="evidence" value="ECO:0007669"/>
    <property type="project" value="UniProtKB-SubCell"/>
</dbReference>
<dbReference type="GO" id="GO:0017004">
    <property type="term" value="P:cytochrome complex assembly"/>
    <property type="evidence" value="ECO:0007669"/>
    <property type="project" value="UniProtKB-UniRule"/>
</dbReference>
<dbReference type="HAMAP" id="MF_01392">
    <property type="entry name" value="CytC_Ccs1"/>
    <property type="match status" value="1"/>
</dbReference>
<dbReference type="InterPro" id="IPR023494">
    <property type="entry name" value="Cyt_c_bgen_Ccs1/CcsB/ResB"/>
</dbReference>
<dbReference type="InterPro" id="IPR007816">
    <property type="entry name" value="ResB-like_domain"/>
</dbReference>
<dbReference type="PANTHER" id="PTHR31566">
    <property type="entry name" value="CYTOCHROME C BIOGENESIS PROTEIN CCS1, CHLOROPLASTIC"/>
    <property type="match status" value="1"/>
</dbReference>
<dbReference type="PANTHER" id="PTHR31566:SF0">
    <property type="entry name" value="CYTOCHROME C BIOGENESIS PROTEIN CCS1, CHLOROPLASTIC"/>
    <property type="match status" value="1"/>
</dbReference>
<dbReference type="Pfam" id="PF05140">
    <property type="entry name" value="ResB"/>
    <property type="match status" value="2"/>
</dbReference>
<sequence length="428" mass="48463">MIIFKNLILKISSLRFAISLIIFIAIASGIGTFIPQDNNNKFYIDNFDRAPIFGLLDGEKVLKLQLDHIYTSFWFLFTLILLCISLAACSFRRQIPSLKASLKWIEYKSEKKFSKLQLTRSHPINQDGEHISKVDLLLKKKGWKTYKFNSHISARKGLIGKIGPLVVHIGLIVLLIGSAYGSFTSQSKEQYLLPGETLNLVNESTNSRANVKLVDFSIERESDGVPKQFISKLNFSSENLNLNEIKTTKVNHPIRFKGLTIYQADWAISNIVLEIDNILYQLQLKEIPEIGNQVWGVLVELGSETKKNYLLTIDNENGPLKISNIENFSGNNLYINEDPLEVNSSKVSLKKIIPSSGLIIKNDPSIPFIYFSFILIIFGTIISLIPTNQLWILVNKESQKLSIGGLSNKNLVGFKKEFFKLSDEIKNF</sequence>
<accession>A2BT34</accession>
<keyword id="KW-0201">Cytochrome c-type biogenesis</keyword>
<keyword id="KW-0472">Membrane</keyword>
<keyword id="KW-0793">Thylakoid</keyword>
<keyword id="KW-0812">Transmembrane</keyword>
<keyword id="KW-1133">Transmembrane helix</keyword>
<feature type="chain" id="PRO_0000363617" description="Cytochrome c biogenesis protein CcsB">
    <location>
        <begin position="1"/>
        <end position="428"/>
    </location>
</feature>
<feature type="transmembrane region" description="Helical" evidence="1">
    <location>
        <begin position="14"/>
        <end position="34"/>
    </location>
</feature>
<feature type="transmembrane region" description="Helical" evidence="1">
    <location>
        <begin position="72"/>
        <end position="92"/>
    </location>
</feature>
<feature type="transmembrane region" description="Helical" evidence="1">
    <location>
        <begin position="162"/>
        <end position="182"/>
    </location>
</feature>
<proteinExistence type="inferred from homology"/>
<comment type="function">
    <text evidence="1">Required during biogenesis of c-type cytochromes (cytochrome c6 and cytochrome f) at the step of heme attachment.</text>
</comment>
<comment type="subunit">
    <text evidence="1">May interact with CcsA.</text>
</comment>
<comment type="subcellular location">
    <subcellularLocation>
        <location evidence="1">Cellular thylakoid membrane</location>
        <topology evidence="1">Multi-pass membrane protein</topology>
    </subcellularLocation>
</comment>
<comment type="similarity">
    <text evidence="1">Belongs to the Ccs1/CcsB family.</text>
</comment>